<accession>Q32BF7</accession>
<reference key="1">
    <citation type="journal article" date="2005" name="Nucleic Acids Res.">
        <title>Genome dynamics and diversity of Shigella species, the etiologic agents of bacillary dysentery.</title>
        <authorList>
            <person name="Yang F."/>
            <person name="Yang J."/>
            <person name="Zhang X."/>
            <person name="Chen L."/>
            <person name="Jiang Y."/>
            <person name="Yan Y."/>
            <person name="Tang X."/>
            <person name="Wang J."/>
            <person name="Xiong Z."/>
            <person name="Dong J."/>
            <person name="Xue Y."/>
            <person name="Zhu Y."/>
            <person name="Xu X."/>
            <person name="Sun L."/>
            <person name="Chen S."/>
            <person name="Nie H."/>
            <person name="Peng J."/>
            <person name="Xu J."/>
            <person name="Wang Y."/>
            <person name="Yuan Z."/>
            <person name="Wen Y."/>
            <person name="Yao Z."/>
            <person name="Shen Y."/>
            <person name="Qiang B."/>
            <person name="Hou Y."/>
            <person name="Yu J."/>
            <person name="Jin Q."/>
        </authorList>
    </citation>
    <scope>NUCLEOTIDE SEQUENCE [LARGE SCALE GENOMIC DNA]</scope>
    <source>
        <strain>Sd197</strain>
    </source>
</reference>
<sequence>MSNRKYFGTDGIRGRVGDAPITPDFVLKLGWAAGKVLARHGSRKIIIGKDTRISGYMLESALEAGLAAAGLSALFTGPMPTPAVAYLTRTFRAEAGIVISASHNPFYDNGIKFFSIDGTKLPDAVEEAIEAEMEKEISCVYSAELGKASRIVDAAGRYIEFCKATFPNELSLSELKIVVDCANGATYHIAPNVLRELGANVIAIGCEPNGVNINAEVGATDVRALQARVLAEKADLGIAFDGDGDRVIMVDHEGNKVDGDQIMYIIAREGLRQGQLRGGAVGTLMSNMGLELALKQLGIPFARAKVGDRYVLEKMQEKGWRIGAENSGHVILLDKTTTGDGIVAGLQVLAAMARNHMSLHDLCSGMKMFPQILVNVRYTAGSGDPLEHESVKAVSAEVEAALGSRGRVLLRKSGTEPLIRVMVEGEDEAQVTEFAHRIADAVKAV</sequence>
<name>GLMM_SHIDS</name>
<gene>
    <name evidence="1" type="primary">glmM</name>
    <name type="ordered locus">SDY_3357</name>
</gene>
<protein>
    <recommendedName>
        <fullName evidence="1">Phosphoglucosamine mutase</fullName>
        <ecNumber evidence="1">5.4.2.10</ecNumber>
    </recommendedName>
</protein>
<keyword id="KW-0413">Isomerase</keyword>
<keyword id="KW-0460">Magnesium</keyword>
<keyword id="KW-0479">Metal-binding</keyword>
<keyword id="KW-0597">Phosphoprotein</keyword>
<keyword id="KW-1185">Reference proteome</keyword>
<dbReference type="EC" id="5.4.2.10" evidence="1"/>
<dbReference type="EMBL" id="CP000034">
    <property type="protein sequence ID" value="ABB63348.1"/>
    <property type="molecule type" value="Genomic_DNA"/>
</dbReference>
<dbReference type="RefSeq" id="WP_000071154.1">
    <property type="nucleotide sequence ID" value="NC_007606.1"/>
</dbReference>
<dbReference type="RefSeq" id="YP_404839.1">
    <property type="nucleotide sequence ID" value="NC_007606.1"/>
</dbReference>
<dbReference type="SMR" id="Q32BF7"/>
<dbReference type="STRING" id="300267.SDY_3357"/>
<dbReference type="EnsemblBacteria" id="ABB63348">
    <property type="protein sequence ID" value="ABB63348"/>
    <property type="gene ID" value="SDY_3357"/>
</dbReference>
<dbReference type="KEGG" id="sdy:SDY_3357"/>
<dbReference type="PATRIC" id="fig|300267.13.peg.4011"/>
<dbReference type="HOGENOM" id="CLU_016950_7_0_6"/>
<dbReference type="Proteomes" id="UP000002716">
    <property type="component" value="Chromosome"/>
</dbReference>
<dbReference type="GO" id="GO:0005829">
    <property type="term" value="C:cytosol"/>
    <property type="evidence" value="ECO:0007669"/>
    <property type="project" value="TreeGrafter"/>
</dbReference>
<dbReference type="GO" id="GO:0000287">
    <property type="term" value="F:magnesium ion binding"/>
    <property type="evidence" value="ECO:0007669"/>
    <property type="project" value="UniProtKB-UniRule"/>
</dbReference>
<dbReference type="GO" id="GO:0008966">
    <property type="term" value="F:phosphoglucosamine mutase activity"/>
    <property type="evidence" value="ECO:0007669"/>
    <property type="project" value="UniProtKB-UniRule"/>
</dbReference>
<dbReference type="GO" id="GO:0004615">
    <property type="term" value="F:phosphomannomutase activity"/>
    <property type="evidence" value="ECO:0007669"/>
    <property type="project" value="TreeGrafter"/>
</dbReference>
<dbReference type="GO" id="GO:0005975">
    <property type="term" value="P:carbohydrate metabolic process"/>
    <property type="evidence" value="ECO:0007669"/>
    <property type="project" value="InterPro"/>
</dbReference>
<dbReference type="GO" id="GO:0009252">
    <property type="term" value="P:peptidoglycan biosynthetic process"/>
    <property type="evidence" value="ECO:0007669"/>
    <property type="project" value="TreeGrafter"/>
</dbReference>
<dbReference type="GO" id="GO:0006048">
    <property type="term" value="P:UDP-N-acetylglucosamine biosynthetic process"/>
    <property type="evidence" value="ECO:0007669"/>
    <property type="project" value="TreeGrafter"/>
</dbReference>
<dbReference type="CDD" id="cd05802">
    <property type="entry name" value="GlmM"/>
    <property type="match status" value="1"/>
</dbReference>
<dbReference type="FunFam" id="3.30.310.50:FF:000001">
    <property type="entry name" value="Phosphoglucosamine mutase"/>
    <property type="match status" value="1"/>
</dbReference>
<dbReference type="FunFam" id="3.40.120.10:FF:000001">
    <property type="entry name" value="Phosphoglucosamine mutase"/>
    <property type="match status" value="1"/>
</dbReference>
<dbReference type="FunFam" id="3.40.120.10:FF:000002">
    <property type="entry name" value="Phosphoglucosamine mutase"/>
    <property type="match status" value="1"/>
</dbReference>
<dbReference type="Gene3D" id="3.40.120.10">
    <property type="entry name" value="Alpha-D-Glucose-1,6-Bisphosphate, subunit A, domain 3"/>
    <property type="match status" value="3"/>
</dbReference>
<dbReference type="Gene3D" id="3.30.310.50">
    <property type="entry name" value="Alpha-D-phosphohexomutase, C-terminal domain"/>
    <property type="match status" value="1"/>
</dbReference>
<dbReference type="HAMAP" id="MF_01554_B">
    <property type="entry name" value="GlmM_B"/>
    <property type="match status" value="1"/>
</dbReference>
<dbReference type="InterPro" id="IPR005844">
    <property type="entry name" value="A-D-PHexomutase_a/b/a-I"/>
</dbReference>
<dbReference type="InterPro" id="IPR016055">
    <property type="entry name" value="A-D-PHexomutase_a/b/a-I/II/III"/>
</dbReference>
<dbReference type="InterPro" id="IPR005845">
    <property type="entry name" value="A-D-PHexomutase_a/b/a-II"/>
</dbReference>
<dbReference type="InterPro" id="IPR005846">
    <property type="entry name" value="A-D-PHexomutase_a/b/a-III"/>
</dbReference>
<dbReference type="InterPro" id="IPR005843">
    <property type="entry name" value="A-D-PHexomutase_C"/>
</dbReference>
<dbReference type="InterPro" id="IPR036900">
    <property type="entry name" value="A-D-PHexomutase_C_sf"/>
</dbReference>
<dbReference type="InterPro" id="IPR016066">
    <property type="entry name" value="A-D-PHexomutase_CS"/>
</dbReference>
<dbReference type="InterPro" id="IPR005841">
    <property type="entry name" value="Alpha-D-phosphohexomutase_SF"/>
</dbReference>
<dbReference type="InterPro" id="IPR006352">
    <property type="entry name" value="GlmM_bact"/>
</dbReference>
<dbReference type="InterPro" id="IPR050060">
    <property type="entry name" value="Phosphoglucosamine_mutase"/>
</dbReference>
<dbReference type="NCBIfam" id="TIGR01455">
    <property type="entry name" value="glmM"/>
    <property type="match status" value="1"/>
</dbReference>
<dbReference type="NCBIfam" id="NF008139">
    <property type="entry name" value="PRK10887.1"/>
    <property type="match status" value="1"/>
</dbReference>
<dbReference type="PANTHER" id="PTHR42946:SF1">
    <property type="entry name" value="PHOSPHOGLUCOMUTASE (ALPHA-D-GLUCOSE-1,6-BISPHOSPHATE-DEPENDENT)"/>
    <property type="match status" value="1"/>
</dbReference>
<dbReference type="PANTHER" id="PTHR42946">
    <property type="entry name" value="PHOSPHOHEXOSE MUTASE"/>
    <property type="match status" value="1"/>
</dbReference>
<dbReference type="Pfam" id="PF02878">
    <property type="entry name" value="PGM_PMM_I"/>
    <property type="match status" value="1"/>
</dbReference>
<dbReference type="Pfam" id="PF02879">
    <property type="entry name" value="PGM_PMM_II"/>
    <property type="match status" value="1"/>
</dbReference>
<dbReference type="Pfam" id="PF02880">
    <property type="entry name" value="PGM_PMM_III"/>
    <property type="match status" value="1"/>
</dbReference>
<dbReference type="Pfam" id="PF00408">
    <property type="entry name" value="PGM_PMM_IV"/>
    <property type="match status" value="1"/>
</dbReference>
<dbReference type="PRINTS" id="PR00509">
    <property type="entry name" value="PGMPMM"/>
</dbReference>
<dbReference type="SUPFAM" id="SSF55957">
    <property type="entry name" value="Phosphoglucomutase, C-terminal domain"/>
    <property type="match status" value="1"/>
</dbReference>
<dbReference type="SUPFAM" id="SSF53738">
    <property type="entry name" value="Phosphoglucomutase, first 3 domains"/>
    <property type="match status" value="3"/>
</dbReference>
<dbReference type="PROSITE" id="PS00710">
    <property type="entry name" value="PGM_PMM"/>
    <property type="match status" value="1"/>
</dbReference>
<comment type="function">
    <text evidence="1">Catalyzes the conversion of glucosamine-6-phosphate to glucosamine-1-phosphate.</text>
</comment>
<comment type="catalytic activity">
    <reaction evidence="1">
        <text>alpha-D-glucosamine 1-phosphate = D-glucosamine 6-phosphate</text>
        <dbReference type="Rhea" id="RHEA:23424"/>
        <dbReference type="ChEBI" id="CHEBI:58516"/>
        <dbReference type="ChEBI" id="CHEBI:58725"/>
        <dbReference type="EC" id="5.4.2.10"/>
    </reaction>
</comment>
<comment type="cofactor">
    <cofactor evidence="1">
        <name>Mg(2+)</name>
        <dbReference type="ChEBI" id="CHEBI:18420"/>
    </cofactor>
    <text evidence="1">Binds 1 Mg(2+) ion per subunit.</text>
</comment>
<comment type="PTM">
    <text evidence="1">Activated by phosphorylation.</text>
</comment>
<comment type="similarity">
    <text evidence="1">Belongs to the phosphohexose mutase family.</text>
</comment>
<evidence type="ECO:0000255" key="1">
    <source>
        <dbReference type="HAMAP-Rule" id="MF_01554"/>
    </source>
</evidence>
<proteinExistence type="inferred from homology"/>
<organism>
    <name type="scientific">Shigella dysenteriae serotype 1 (strain Sd197)</name>
    <dbReference type="NCBI Taxonomy" id="300267"/>
    <lineage>
        <taxon>Bacteria</taxon>
        <taxon>Pseudomonadati</taxon>
        <taxon>Pseudomonadota</taxon>
        <taxon>Gammaproteobacteria</taxon>
        <taxon>Enterobacterales</taxon>
        <taxon>Enterobacteriaceae</taxon>
        <taxon>Shigella</taxon>
    </lineage>
</organism>
<feature type="chain" id="PRO_0000301380" description="Phosphoglucosamine mutase">
    <location>
        <begin position="1"/>
        <end position="445"/>
    </location>
</feature>
<feature type="active site" description="Phosphoserine intermediate" evidence="1">
    <location>
        <position position="102"/>
    </location>
</feature>
<feature type="binding site" description="via phosphate group" evidence="1">
    <location>
        <position position="102"/>
    </location>
    <ligand>
        <name>Mg(2+)</name>
        <dbReference type="ChEBI" id="CHEBI:18420"/>
    </ligand>
</feature>
<feature type="binding site" evidence="1">
    <location>
        <position position="241"/>
    </location>
    <ligand>
        <name>Mg(2+)</name>
        <dbReference type="ChEBI" id="CHEBI:18420"/>
    </ligand>
</feature>
<feature type="binding site" evidence="1">
    <location>
        <position position="243"/>
    </location>
    <ligand>
        <name>Mg(2+)</name>
        <dbReference type="ChEBI" id="CHEBI:18420"/>
    </ligand>
</feature>
<feature type="binding site" evidence="1">
    <location>
        <position position="245"/>
    </location>
    <ligand>
        <name>Mg(2+)</name>
        <dbReference type="ChEBI" id="CHEBI:18420"/>
    </ligand>
</feature>
<feature type="modified residue" description="Phosphoserine" evidence="1">
    <location>
        <position position="102"/>
    </location>
</feature>